<reference key="1">
    <citation type="submission" date="2004-02" db="EMBL/GenBank/DDBJ databases">
        <authorList>
            <consortium name="NIH - Zebrafish Gene Collection (ZGC) project"/>
        </authorList>
    </citation>
    <scope>NUCLEOTIDE SEQUENCE [LARGE SCALE MRNA]</scope>
    <source>
        <strain>AB</strain>
        <tissue>Kidney</tissue>
    </source>
</reference>
<feature type="transit peptide" description="Mitochondrion" evidence="3">
    <location>
        <begin position="1"/>
        <end position="43"/>
    </location>
</feature>
<feature type="chain" id="PRO_0000010327" description="Fumarate hydratase, mitochondrial">
    <location>
        <begin position="44"/>
        <end position="509"/>
    </location>
</feature>
<feature type="active site" description="Proton donor/acceptor" evidence="1">
    <location>
        <position position="234"/>
    </location>
</feature>
<feature type="active site" evidence="5">
    <location>
        <position position="364"/>
    </location>
</feature>
<feature type="binding site" evidence="1">
    <location>
        <begin position="144"/>
        <end position="146"/>
    </location>
    <ligand>
        <name>substrate</name>
    </ligand>
</feature>
<feature type="binding site" description="in site B" evidence="1">
    <location>
        <begin position="175"/>
        <end position="178"/>
    </location>
    <ligand>
        <name>substrate</name>
    </ligand>
</feature>
<feature type="binding site" evidence="1">
    <location>
        <begin position="185"/>
        <end position="187"/>
    </location>
    <ligand>
        <name>substrate</name>
    </ligand>
</feature>
<feature type="binding site" evidence="5">
    <location>
        <position position="233"/>
    </location>
    <ligand>
        <name>substrate</name>
    </ligand>
</feature>
<feature type="binding site" evidence="5">
    <location>
        <position position="365"/>
    </location>
    <ligand>
        <name>substrate</name>
    </ligand>
</feature>
<feature type="binding site" evidence="5">
    <location>
        <begin position="370"/>
        <end position="372"/>
    </location>
    <ligand>
        <name>substrate</name>
    </ligand>
</feature>
<feature type="site" description="Important for catalytic activity" evidence="1">
    <location>
        <position position="377"/>
    </location>
</feature>
<feature type="splice variant" id="VSP_060137" description="In isoform Cytoplasmic.">
    <location>
        <begin position="1"/>
        <end position="42"/>
    </location>
</feature>
<feature type="initiator methionine" description="Removed" evidence="2">
    <location sequence="Q7SX99-2">
        <position position="1"/>
    </location>
</feature>
<evidence type="ECO:0000250" key="1">
    <source>
        <dbReference type="UniProtKB" id="P05042"/>
    </source>
</evidence>
<evidence type="ECO:0000250" key="2">
    <source>
        <dbReference type="UniProtKB" id="P07954"/>
    </source>
</evidence>
<evidence type="ECO:0000250" key="3">
    <source>
        <dbReference type="UniProtKB" id="P10173"/>
    </source>
</evidence>
<evidence type="ECO:0000250" key="4">
    <source>
        <dbReference type="UniProtKB" id="P97807"/>
    </source>
</evidence>
<evidence type="ECO:0000250" key="5">
    <source>
        <dbReference type="UniProtKB" id="P9WN93"/>
    </source>
</evidence>
<evidence type="ECO:0000303" key="6">
    <source ref="1"/>
</evidence>
<evidence type="ECO:0000305" key="7"/>
<organism>
    <name type="scientific">Danio rerio</name>
    <name type="common">Zebrafish</name>
    <name type="synonym">Brachydanio rerio</name>
    <dbReference type="NCBI Taxonomy" id="7955"/>
    <lineage>
        <taxon>Eukaryota</taxon>
        <taxon>Metazoa</taxon>
        <taxon>Chordata</taxon>
        <taxon>Craniata</taxon>
        <taxon>Vertebrata</taxon>
        <taxon>Euteleostomi</taxon>
        <taxon>Actinopterygii</taxon>
        <taxon>Neopterygii</taxon>
        <taxon>Teleostei</taxon>
        <taxon>Ostariophysi</taxon>
        <taxon>Cypriniformes</taxon>
        <taxon>Danionidae</taxon>
        <taxon>Danioninae</taxon>
        <taxon>Danio</taxon>
    </lineage>
</organism>
<sequence length="509" mass="54861">MYRSARSLHRFSASLSDLRAAQRSIKARNVCPAPGLRHQTVRMASSEAFRIERDTFGELKVPSDKYYGAQTVRSTMNFRIGGVTERMPIQVIRAFGILKKAAAEVNKDYGLDPKIADAIMKAADEVESGKLDDHFPLVVWQTGSGTQTNMNVNEVISNRAIEMLGGKLGSKDPVHPNDHVNKSQSSNDTFPTAMHIAAAKEVHEVLLPGLQTLHDALAAKAEQFKDIIKIGRTHTQDAVPLSLGQEFGGYVQQVKYSIARVKASLPRVYELAAGGTAVGTGLNTRIGFAEKVADKVSALTGLPFVTAANKFEALAAHDALVELSGALNTVAVSMMKIANDIRFLGSGPRSGLGELILPENEPGSSIMPGKVNPTQCEAMTMVAAQVMGNHVAVTVGGSNGHFELNVFKPMIIKNVLNSARLLGDASVSFTNNCVVGIEANTERINKLMSESLMLVTALNPHIGYDKAAKIAKTAHKDGSTLKEAALKLGFLNEQQFEEWVRPHDMLGPK</sequence>
<accession>Q7SX99</accession>
<dbReference type="EC" id="4.2.1.2" evidence="2"/>
<dbReference type="EMBL" id="BC055566">
    <property type="protein sequence ID" value="AAH55566.1"/>
    <property type="molecule type" value="mRNA"/>
</dbReference>
<dbReference type="EMBL" id="BC066484">
    <property type="protein sequence ID" value="AAH66484.1"/>
    <property type="molecule type" value="mRNA"/>
</dbReference>
<dbReference type="RefSeq" id="NP_957257.1">
    <molecule id="Q7SX99-1"/>
    <property type="nucleotide sequence ID" value="NM_200963.1"/>
</dbReference>
<dbReference type="SMR" id="Q7SX99"/>
<dbReference type="FunCoup" id="Q7SX99">
    <property type="interactions" value="2337"/>
</dbReference>
<dbReference type="STRING" id="7955.ENSDARP00000097494"/>
<dbReference type="PaxDb" id="7955-ENSDARP00000097494"/>
<dbReference type="GeneID" id="393938"/>
<dbReference type="KEGG" id="dre:393938"/>
<dbReference type="AGR" id="ZFIN:ZDB-GENE-010724-6"/>
<dbReference type="CTD" id="2271"/>
<dbReference type="ZFIN" id="ZDB-GENE-010724-6">
    <property type="gene designation" value="fh"/>
</dbReference>
<dbReference type="eggNOG" id="KOG1317">
    <property type="taxonomic scope" value="Eukaryota"/>
</dbReference>
<dbReference type="InParanoid" id="Q7SX99"/>
<dbReference type="OrthoDB" id="1738025at2759"/>
<dbReference type="PhylomeDB" id="Q7SX99"/>
<dbReference type="Reactome" id="R-DRE-71403">
    <property type="pathway name" value="Citric acid cycle (TCA cycle)"/>
</dbReference>
<dbReference type="UniPathway" id="UPA00223">
    <property type="reaction ID" value="UER01007"/>
</dbReference>
<dbReference type="PRO" id="PR:Q7SX99"/>
<dbReference type="Proteomes" id="UP000000437">
    <property type="component" value="Chromosome 12"/>
</dbReference>
<dbReference type="GO" id="GO:0005694">
    <property type="term" value="C:chromosome"/>
    <property type="evidence" value="ECO:0007669"/>
    <property type="project" value="UniProtKB-SubCell"/>
</dbReference>
<dbReference type="GO" id="GO:0005829">
    <property type="term" value="C:cytosol"/>
    <property type="evidence" value="ECO:0007669"/>
    <property type="project" value="UniProtKB-SubCell"/>
</dbReference>
<dbReference type="GO" id="GO:0005739">
    <property type="term" value="C:mitochondrion"/>
    <property type="evidence" value="ECO:0000318"/>
    <property type="project" value="GO_Central"/>
</dbReference>
<dbReference type="GO" id="GO:0005634">
    <property type="term" value="C:nucleus"/>
    <property type="evidence" value="ECO:0007669"/>
    <property type="project" value="UniProtKB-SubCell"/>
</dbReference>
<dbReference type="GO" id="GO:0004333">
    <property type="term" value="F:fumarate hydratase activity"/>
    <property type="evidence" value="ECO:0000250"/>
    <property type="project" value="UniProtKB"/>
</dbReference>
<dbReference type="GO" id="GO:0006974">
    <property type="term" value="P:DNA damage response"/>
    <property type="evidence" value="ECO:0000250"/>
    <property type="project" value="UniProtKB"/>
</dbReference>
<dbReference type="GO" id="GO:0006281">
    <property type="term" value="P:DNA repair"/>
    <property type="evidence" value="ECO:0007669"/>
    <property type="project" value="UniProtKB-KW"/>
</dbReference>
<dbReference type="GO" id="GO:0006106">
    <property type="term" value="P:fumarate metabolic process"/>
    <property type="evidence" value="ECO:0000250"/>
    <property type="project" value="UniProtKB"/>
</dbReference>
<dbReference type="GO" id="GO:0006108">
    <property type="term" value="P:malate metabolic process"/>
    <property type="evidence" value="ECO:0000250"/>
    <property type="project" value="UniProtKB"/>
</dbReference>
<dbReference type="GO" id="GO:2001034">
    <property type="term" value="P:positive regulation of double-strand break repair via nonhomologous end joining"/>
    <property type="evidence" value="ECO:0000250"/>
    <property type="project" value="UniProtKB"/>
</dbReference>
<dbReference type="GO" id="GO:0000821">
    <property type="term" value="P:regulation of arginine metabolic process"/>
    <property type="evidence" value="ECO:0000250"/>
    <property type="project" value="UniProtKB"/>
</dbReference>
<dbReference type="GO" id="GO:0006099">
    <property type="term" value="P:tricarboxylic acid cycle"/>
    <property type="evidence" value="ECO:0000318"/>
    <property type="project" value="GO_Central"/>
</dbReference>
<dbReference type="GO" id="GO:0000050">
    <property type="term" value="P:urea cycle"/>
    <property type="evidence" value="ECO:0000250"/>
    <property type="project" value="UniProtKB"/>
</dbReference>
<dbReference type="CDD" id="cd01362">
    <property type="entry name" value="Fumarase_classII"/>
    <property type="match status" value="1"/>
</dbReference>
<dbReference type="FunFam" id="1.10.40.30:FF:000002">
    <property type="entry name" value="Fumarate hydratase class II"/>
    <property type="match status" value="1"/>
</dbReference>
<dbReference type="FunFam" id="1.10.275.10:FF:000001">
    <property type="entry name" value="Fumarate hydratase, mitochondrial"/>
    <property type="match status" value="1"/>
</dbReference>
<dbReference type="FunFam" id="1.20.200.10:FF:000001">
    <property type="entry name" value="Fumarate hydratase, mitochondrial"/>
    <property type="match status" value="1"/>
</dbReference>
<dbReference type="Gene3D" id="1.10.40.30">
    <property type="entry name" value="Fumarase/aspartase (C-terminal domain)"/>
    <property type="match status" value="1"/>
</dbReference>
<dbReference type="Gene3D" id="1.20.200.10">
    <property type="entry name" value="Fumarase/aspartase (Central domain)"/>
    <property type="match status" value="1"/>
</dbReference>
<dbReference type="Gene3D" id="1.10.275.10">
    <property type="entry name" value="Fumarase/aspartase (N-terminal domain)"/>
    <property type="match status" value="1"/>
</dbReference>
<dbReference type="HAMAP" id="MF_00743">
    <property type="entry name" value="FumaraseC"/>
    <property type="match status" value="1"/>
</dbReference>
<dbReference type="InterPro" id="IPR005677">
    <property type="entry name" value="Fum_hydII"/>
</dbReference>
<dbReference type="InterPro" id="IPR024083">
    <property type="entry name" value="Fumarase/histidase_N"/>
</dbReference>
<dbReference type="InterPro" id="IPR018951">
    <property type="entry name" value="Fumarase_C_C"/>
</dbReference>
<dbReference type="InterPro" id="IPR020557">
    <property type="entry name" value="Fumarate_lyase_CS"/>
</dbReference>
<dbReference type="InterPro" id="IPR000362">
    <property type="entry name" value="Fumarate_lyase_fam"/>
</dbReference>
<dbReference type="InterPro" id="IPR022761">
    <property type="entry name" value="Fumarate_lyase_N"/>
</dbReference>
<dbReference type="InterPro" id="IPR008948">
    <property type="entry name" value="L-Aspartase-like"/>
</dbReference>
<dbReference type="NCBIfam" id="TIGR00979">
    <property type="entry name" value="fumC_II"/>
    <property type="match status" value="1"/>
</dbReference>
<dbReference type="NCBIfam" id="NF008909">
    <property type="entry name" value="PRK12273.1"/>
    <property type="match status" value="1"/>
</dbReference>
<dbReference type="PANTHER" id="PTHR11444">
    <property type="entry name" value="ASPARTATEAMMONIA/ARGININOSUCCINATE/ADENYLOSUCCINATE LYASE"/>
    <property type="match status" value="1"/>
</dbReference>
<dbReference type="PANTHER" id="PTHR11444:SF1">
    <property type="entry name" value="FUMARATE HYDRATASE, MITOCHONDRIAL"/>
    <property type="match status" value="1"/>
</dbReference>
<dbReference type="Pfam" id="PF10415">
    <property type="entry name" value="FumaraseC_C"/>
    <property type="match status" value="1"/>
</dbReference>
<dbReference type="Pfam" id="PF00206">
    <property type="entry name" value="Lyase_1"/>
    <property type="match status" value="1"/>
</dbReference>
<dbReference type="PRINTS" id="PR00145">
    <property type="entry name" value="ARGSUCLYASE"/>
</dbReference>
<dbReference type="PRINTS" id="PR00149">
    <property type="entry name" value="FUMRATELYASE"/>
</dbReference>
<dbReference type="SUPFAM" id="SSF48557">
    <property type="entry name" value="L-aspartase-like"/>
    <property type="match status" value="1"/>
</dbReference>
<dbReference type="PROSITE" id="PS00163">
    <property type="entry name" value="FUMARATE_LYASES"/>
    <property type="match status" value="1"/>
</dbReference>
<keyword id="KW-0024">Alternative initiation</keyword>
<keyword id="KW-0158">Chromosome</keyword>
<keyword id="KW-0963">Cytoplasm</keyword>
<keyword id="KW-0227">DNA damage</keyword>
<keyword id="KW-0234">DNA repair</keyword>
<keyword id="KW-0456">Lyase</keyword>
<keyword id="KW-0496">Mitochondrion</keyword>
<keyword id="KW-0539">Nucleus</keyword>
<keyword id="KW-1185">Reference proteome</keyword>
<keyword id="KW-0809">Transit peptide</keyword>
<keyword id="KW-0816">Tricarboxylic acid cycle</keyword>
<comment type="function">
    <text evidence="2 7">Catalyzes the reversible stereospecific interconversion of fumarate to L-malate (By similarity). Experiments in other species have demonstrated that specific isoforms of this protein act in defined pathways and favor one direction over the other (Probable).</text>
</comment>
<comment type="function">
    <molecule>Isoform Mitochondrial</molecule>
    <text evidence="3">Catalyzes the hydration of fumarate to L-malate in the tricarboxylic acid (TCA) cycle to facilitate a transition step in the production of energy in the form of NADH.</text>
</comment>
<comment type="function">
    <molecule>Isoform Cytoplasmic</molecule>
    <text evidence="2 4">Catalyzes the dehydration of L-malate to fumarate. Fumarate metabolism in the cytosol plays a role during urea cycle and arginine metabolism; fumarate being a by-product of the urea cycle and amino-acid catabolism (By similarity). Also plays a role in DNA repair by promoting non-homologous end-joining (NHEJ). In response to DNA damage translocates to the nucleus and accumulates at DNA double-strand breaks (DSBs): acts by catalyzing formation of fumarate (By similarity).</text>
</comment>
<comment type="catalytic activity">
    <molecule>Isoform Mitochondrial</molecule>
    <reaction evidence="3">
        <text>(S)-malate = fumarate + H2O</text>
        <dbReference type="Rhea" id="RHEA:12460"/>
        <dbReference type="ChEBI" id="CHEBI:15377"/>
        <dbReference type="ChEBI" id="CHEBI:15589"/>
        <dbReference type="ChEBI" id="CHEBI:29806"/>
        <dbReference type="EC" id="4.2.1.2"/>
    </reaction>
    <physiologicalReaction direction="right-to-left" evidence="3">
        <dbReference type="Rhea" id="RHEA:12462"/>
    </physiologicalReaction>
</comment>
<comment type="catalytic activity">
    <molecule>Isoform Cytoplasmic</molecule>
    <reaction evidence="4">
        <text>(S)-malate = fumarate + H2O</text>
        <dbReference type="Rhea" id="RHEA:12460"/>
        <dbReference type="ChEBI" id="CHEBI:15377"/>
        <dbReference type="ChEBI" id="CHEBI:15589"/>
        <dbReference type="ChEBI" id="CHEBI:29806"/>
        <dbReference type="EC" id="4.2.1.2"/>
    </reaction>
    <physiologicalReaction direction="left-to-right" evidence="4">
        <dbReference type="Rhea" id="RHEA:12461"/>
    </physiologicalReaction>
</comment>
<comment type="pathway">
    <text evidence="3">Carbohydrate metabolism; tricarboxylic acid cycle; (S)-malate from fumarate: step 1/1.</text>
</comment>
<comment type="subunit">
    <text evidence="2">Homotetramer.</text>
</comment>
<comment type="subcellular location">
    <molecule>Isoform Mitochondrial</molecule>
    <subcellularLocation>
        <location evidence="2">Mitochondrion</location>
    </subcellularLocation>
</comment>
<comment type="subcellular location">
    <molecule>Isoform Cytoplasmic</molecule>
    <subcellularLocation>
        <location evidence="2">Cytoplasm</location>
        <location evidence="2">Cytosol</location>
    </subcellularLocation>
    <subcellularLocation>
        <location evidence="2">Nucleus</location>
    </subcellularLocation>
    <subcellularLocation>
        <location evidence="2">Chromosome</location>
    </subcellularLocation>
    <text evidence="2">Translocates to the nucleus in response to DNA damage: localizes to DNA double-strand breaks (DSBs).</text>
</comment>
<comment type="alternative products">
    <event type="alternative initiation"/>
    <isoform>
        <id>Q7SX99-1</id>
        <name>Mitochondrial</name>
        <sequence type="displayed"/>
    </isoform>
    <isoform>
        <id>Q7SX99-2</id>
        <name>Cytoplasmic</name>
        <sequence type="described" ref="VSP_060137"/>
    </isoform>
</comment>
<comment type="miscellaneous">
    <text evidence="1 5">There are 2 substrate-binding sites: the catalytic A site, and the non-catalytic B site that may play a role in the transfer of substrate or product between the active site and the solvent. Alternatively, the B site may bind allosteric effectors.</text>
</comment>
<comment type="similarity">
    <text evidence="7">Belongs to the class-II fumarase/aspartase family. Fumarase subfamily.</text>
</comment>
<gene>
    <name evidence="2" type="primary">fh</name>
    <name evidence="6" type="ORF">zgc:66253</name>
</gene>
<proteinExistence type="evidence at transcript level"/>
<name>FUMH_DANRE</name>
<protein>
    <recommendedName>
        <fullName evidence="2">Fumarate hydratase, mitochondrial</fullName>
        <shortName evidence="2">Fumarase</shortName>
        <ecNumber evidence="2">4.2.1.2</ecNumber>
    </recommendedName>
</protein>